<organismHost>
    <name type="scientific">Equus caballus</name>
    <name type="common">Horse</name>
    <dbReference type="NCBI Taxonomy" id="9796"/>
</organismHost>
<comment type="function">
    <text evidence="1">Component of the helicase/primase complex. Unwinds the DNA at the replication forks and generates single-stranded DNA for both leading and lagging strand synthesis. The primase synthesizes short RNA primers on the lagging strand that the polymerase presumably elongates using dNTPs. The primase-associated factor has no known catalytic activity in the complex and may serve to facilitate the formation of the replisome by directly interacting with the origin-binding protein and the polymerase.</text>
</comment>
<comment type="subunit">
    <text evidence="1">Associates with the primase and the helicase to form the helicase-primase complex. Interacts with the origin-binding protein. Interacts with the polymerase catalytic subunit.</text>
</comment>
<comment type="subcellular location">
    <subcellularLocation>
        <location evidence="1">Host nucleus</location>
    </subcellularLocation>
</comment>
<comment type="similarity">
    <text evidence="1">Belongs to the herpesviridae HEPA family.</text>
</comment>
<feature type="chain" id="PRO_0000406027" description="DNA helicase/primase complex-associated protein">
    <location>
        <begin position="1"/>
        <end position="706"/>
    </location>
</feature>
<feature type="region of interest" description="Disordered" evidence="2">
    <location>
        <begin position="203"/>
        <end position="249"/>
    </location>
</feature>
<feature type="compositionally biased region" description="Gly residues" evidence="2">
    <location>
        <begin position="217"/>
        <end position="236"/>
    </location>
</feature>
<accession>Q66643</accession>
<accession>Q66644</accession>
<gene>
    <name type="primary">40</name>
</gene>
<dbReference type="EMBL" id="U20824">
    <property type="protein sequence ID" value="AAC13828.2"/>
    <property type="molecule type" value="Genomic_DNA"/>
</dbReference>
<dbReference type="PIR" id="S55635">
    <property type="entry name" value="S55635"/>
</dbReference>
<dbReference type="PIR" id="S55636">
    <property type="entry name" value="S55636"/>
</dbReference>
<dbReference type="KEGG" id="vg:1461036"/>
<dbReference type="Proteomes" id="UP000007083">
    <property type="component" value="Segment"/>
</dbReference>
<dbReference type="GO" id="GO:0042025">
    <property type="term" value="C:host cell nucleus"/>
    <property type="evidence" value="ECO:0007669"/>
    <property type="project" value="UniProtKB-SubCell"/>
</dbReference>
<dbReference type="GO" id="GO:0005524">
    <property type="term" value="F:ATP binding"/>
    <property type="evidence" value="ECO:0007669"/>
    <property type="project" value="UniProtKB-KW"/>
</dbReference>
<dbReference type="GO" id="GO:0004386">
    <property type="term" value="F:helicase activity"/>
    <property type="evidence" value="ECO:0007669"/>
    <property type="project" value="UniProtKB-KW"/>
</dbReference>
<dbReference type="GO" id="GO:0016787">
    <property type="term" value="F:hydrolase activity"/>
    <property type="evidence" value="ECO:0007669"/>
    <property type="project" value="UniProtKB-KW"/>
</dbReference>
<dbReference type="GO" id="GO:0006260">
    <property type="term" value="P:DNA replication"/>
    <property type="evidence" value="ECO:0007669"/>
    <property type="project" value="UniProtKB-KW"/>
</dbReference>
<dbReference type="GO" id="GO:0019079">
    <property type="term" value="P:viral genome replication"/>
    <property type="evidence" value="ECO:0007669"/>
    <property type="project" value="InterPro"/>
</dbReference>
<dbReference type="HAMAP" id="MF_04010">
    <property type="entry name" value="HSV_HEPA"/>
    <property type="match status" value="1"/>
</dbReference>
<dbReference type="InterPro" id="IPR008650">
    <property type="entry name" value="Helicase-primas_cplx_Herpesvir"/>
</dbReference>
<dbReference type="InterPro" id="IPR004996">
    <property type="entry name" value="HSV_HEPA"/>
</dbReference>
<dbReference type="Pfam" id="PF05774">
    <property type="entry name" value="Herpes_heli_pri"/>
    <property type="match status" value="1"/>
</dbReference>
<dbReference type="Pfam" id="PF03324">
    <property type="entry name" value="Herpes_HEPA"/>
    <property type="match status" value="1"/>
</dbReference>
<keyword id="KW-0067">ATP-binding</keyword>
<keyword id="KW-0235">DNA replication</keyword>
<keyword id="KW-0347">Helicase</keyword>
<keyword id="KW-1048">Host nucleus</keyword>
<keyword id="KW-0378">Hydrolase</keyword>
<keyword id="KW-0547">Nucleotide-binding</keyword>
<keyword id="KW-1185">Reference proteome</keyword>
<name>HEPA_EHV2</name>
<organism>
    <name type="scientific">Equine herpesvirus 2 (strain 86/87)</name>
    <name type="common">EHV-2</name>
    <dbReference type="NCBI Taxonomy" id="82831"/>
    <lineage>
        <taxon>Viruses</taxon>
        <taxon>Duplodnaviria</taxon>
        <taxon>Heunggongvirae</taxon>
        <taxon>Peploviricota</taxon>
        <taxon>Herviviricetes</taxon>
        <taxon>Herpesvirales</taxon>
        <taxon>Orthoherpesviridae</taxon>
        <taxon>Gammaherpesvirinae</taxon>
        <taxon>Percavirus</taxon>
        <taxon>Percavirus equidgamma2</taxon>
        <taxon>Equid gammaherpesvirus 2</taxon>
    </lineage>
</organism>
<protein>
    <recommendedName>
        <fullName evidence="1">DNA helicase/primase complex-associated protein</fullName>
        <shortName evidence="1">HEPA</shortName>
    </recommendedName>
    <alternativeName>
        <fullName evidence="1">Primase-associated factor</fullName>
    </alternativeName>
</protein>
<reference key="1">
    <citation type="journal article" date="1995" name="J. Mol. Biol.">
        <title>The DNA sequence of equine herpesvirus 2.</title>
        <authorList>
            <person name="Telford E.A.R."/>
            <person name="Watson M.S."/>
            <person name="Aird H.C."/>
            <person name="Perry J."/>
            <person name="Davison A.J."/>
        </authorList>
    </citation>
    <scope>NUCLEOTIDE SEQUENCE [LARGE SCALE GENOMIC DNA]</scope>
</reference>
<reference key="2">
    <citation type="submission" date="2015-01" db="EMBL/GenBank/DDBJ databases">
        <authorList>
            <person name="Davison A.J."/>
        </authorList>
    </citation>
    <scope>SEQUENCE REVISION</scope>
</reference>
<evidence type="ECO:0000255" key="1">
    <source>
        <dbReference type="HAMAP-Rule" id="MF_04010"/>
    </source>
</evidence>
<evidence type="ECO:0000256" key="2">
    <source>
        <dbReference type="SAM" id="MobiDB-lite"/>
    </source>
</evidence>
<proteinExistence type="inferred from homology"/>
<sequence length="706" mass="76274">MALSPVRVTEGKPLGVYFYNVWREARLVIWYVSYTPSGQTEALDFVFVVQEVCDEKWSALPASAGEASAFESGIHTILWERELRGHNEWIAALEGRGGEVFVFEADAGRVLTGLRVKGEEEGVGGGGGGGGEGEYSPETLRNAYFFSQSRQEFSSGRGGDAGREEAGAPVSGKEKLWFRGMVEDVCVSDVDIVIRTARGVYSCPGGDGGEEGDGAEGGDGGVGGAGDGAGAGGGSSGKPPAGKRGRPTRLRITDLFRPVDCELAWRGRAVKLRPVLADFDVMWANPESAWNCCLPEFFRALLARTTRDFEGLPPALLYVFPAACREGSRFPPHFAGFPFFRVLFEPMRRVTADWLVAGDDRPPGGILLHHPPFYRSRLADRVLCPGLRGDEIVRRARAGGGNCWPLFATELNEGLCPEGRHDLLRVERAHALLTLDLARAACSMLGARVENPGEFLARVVETGSRDLLNAATSAYNLLLTGVLRWAAEAGFAWAAIDKSRVFLVSEAEPPSEDAEEIEESLWASLGDHPPPCVGLVSGYGRENASVFLLWKSDRVLVGKSSDLSCPERRCGSWRESLDAALSLTLTEAPDPAGILRELMPSYHAHRHETKFWLVDRAFAAGRPERAPPMPVDCLRPAPYLLIGEGAVCWHEALDLPLDVDFAAYLSETLSCVSAALAPPGGGGEAGEGRNNTDHCLEEFKSVLSLL</sequence>